<sequence>MTLLTQSSTWQALSAHSKNVPHMRELFATDAARFNKMSLSACGLLLDYSKNRATAETLDLLFALASNSQLEAKIKAMFAGEIINTTEKRAVLHTALRSTAEQSIIAEGQDIVPEVQQTLNKMQGFVSSVTSGQWKGYTSKAITDIVSIGIGGSFLGPKIVSQALRPYWNPELKCHFVANVDGTSISEKLKLLDPETTLFIMSSKSFGTQETLTNTLTAREWFLAKGGLQSDVAKHFVAVTSNVAKATDFGIDADNIFPMWDWVGGRYSLWSAIGLPIALLIGMDNFRALLSGAHQMDEHFANAPLTENMPVIMGLLSLWYGNFFNAQSHVVLTYDHYLRGLPAYFQQLDMESNGKSVTLNGTDVDYSTGPVIWGGEGTNGQHAYHQLLHQGTALIPADFIMPLQSHNPIGEHHDQLASNCFGQTQALMQGRTFDEALAELANSALSATEKQLIAKHKVMPGNKPSNTLLMDKLTPSTLGALIALYEHRTFVQGAIWDINSFDQWGVELGKDLGNDVLARIGASQDCDALDASSNALINLYRQGKI</sequence>
<evidence type="ECO:0000255" key="1">
    <source>
        <dbReference type="HAMAP-Rule" id="MF_00473"/>
    </source>
</evidence>
<reference key="1">
    <citation type="submission" date="2007-02" db="EMBL/GenBank/DDBJ databases">
        <title>Complete sequence of chromosome of Shewanella baltica OS155.</title>
        <authorList>
            <consortium name="US DOE Joint Genome Institute"/>
            <person name="Copeland A."/>
            <person name="Lucas S."/>
            <person name="Lapidus A."/>
            <person name="Barry K."/>
            <person name="Detter J.C."/>
            <person name="Glavina del Rio T."/>
            <person name="Hammon N."/>
            <person name="Israni S."/>
            <person name="Dalin E."/>
            <person name="Tice H."/>
            <person name="Pitluck S."/>
            <person name="Sims D.R."/>
            <person name="Brettin T."/>
            <person name="Bruce D."/>
            <person name="Han C."/>
            <person name="Tapia R."/>
            <person name="Brainard J."/>
            <person name="Schmutz J."/>
            <person name="Larimer F."/>
            <person name="Land M."/>
            <person name="Hauser L."/>
            <person name="Kyrpides N."/>
            <person name="Mikhailova N."/>
            <person name="Brettar I."/>
            <person name="Klappenbach J."/>
            <person name="Konstantinidis K."/>
            <person name="Rodrigues J."/>
            <person name="Tiedje J."/>
            <person name="Richardson P."/>
        </authorList>
    </citation>
    <scope>NUCLEOTIDE SEQUENCE [LARGE SCALE GENOMIC DNA]</scope>
    <source>
        <strain>OS155 / ATCC BAA-1091</strain>
    </source>
</reference>
<keyword id="KW-0963">Cytoplasm</keyword>
<keyword id="KW-0312">Gluconeogenesis</keyword>
<keyword id="KW-0324">Glycolysis</keyword>
<keyword id="KW-0413">Isomerase</keyword>
<keyword id="KW-1185">Reference proteome</keyword>
<accession>A3D1F4</accession>
<proteinExistence type="inferred from homology"/>
<feature type="chain" id="PRO_1000014011" description="Glucose-6-phosphate isomerase">
    <location>
        <begin position="1"/>
        <end position="545"/>
    </location>
</feature>
<feature type="active site" description="Proton donor" evidence="1">
    <location>
        <position position="351"/>
    </location>
</feature>
<feature type="active site" evidence="1">
    <location>
        <position position="382"/>
    </location>
</feature>
<feature type="active site" evidence="1">
    <location>
        <position position="510"/>
    </location>
</feature>
<name>G6PI_SHEB5</name>
<comment type="function">
    <text evidence="1">Catalyzes the reversible isomerization of glucose-6-phosphate to fructose-6-phosphate.</text>
</comment>
<comment type="catalytic activity">
    <reaction evidence="1">
        <text>alpha-D-glucose 6-phosphate = beta-D-fructose 6-phosphate</text>
        <dbReference type="Rhea" id="RHEA:11816"/>
        <dbReference type="ChEBI" id="CHEBI:57634"/>
        <dbReference type="ChEBI" id="CHEBI:58225"/>
        <dbReference type="EC" id="5.3.1.9"/>
    </reaction>
</comment>
<comment type="pathway">
    <text evidence="1">Carbohydrate biosynthesis; gluconeogenesis.</text>
</comment>
<comment type="pathway">
    <text evidence="1">Carbohydrate degradation; glycolysis; D-glyceraldehyde 3-phosphate and glycerone phosphate from D-glucose: step 2/4.</text>
</comment>
<comment type="subcellular location">
    <subcellularLocation>
        <location evidence="1">Cytoplasm</location>
    </subcellularLocation>
</comment>
<comment type="similarity">
    <text evidence="1">Belongs to the GPI family.</text>
</comment>
<protein>
    <recommendedName>
        <fullName evidence="1">Glucose-6-phosphate isomerase</fullName>
        <shortName evidence="1">GPI</shortName>
        <ecNumber evidence="1">5.3.1.9</ecNumber>
    </recommendedName>
    <alternativeName>
        <fullName evidence="1">Phosphoglucose isomerase</fullName>
        <shortName evidence="1">PGI</shortName>
    </alternativeName>
    <alternativeName>
        <fullName evidence="1">Phosphohexose isomerase</fullName>
        <shortName evidence="1">PHI</shortName>
    </alternativeName>
</protein>
<organism>
    <name type="scientific">Shewanella baltica (strain OS155 / ATCC BAA-1091)</name>
    <dbReference type="NCBI Taxonomy" id="325240"/>
    <lineage>
        <taxon>Bacteria</taxon>
        <taxon>Pseudomonadati</taxon>
        <taxon>Pseudomonadota</taxon>
        <taxon>Gammaproteobacteria</taxon>
        <taxon>Alteromonadales</taxon>
        <taxon>Shewanellaceae</taxon>
        <taxon>Shewanella</taxon>
    </lineage>
</organism>
<gene>
    <name evidence="1" type="primary">pgi</name>
    <name type="ordered locus">Sbal_1043</name>
</gene>
<dbReference type="EC" id="5.3.1.9" evidence="1"/>
<dbReference type="EMBL" id="CP000563">
    <property type="protein sequence ID" value="ABN60567.1"/>
    <property type="molecule type" value="Genomic_DNA"/>
</dbReference>
<dbReference type="RefSeq" id="WP_011846073.1">
    <property type="nucleotide sequence ID" value="NC_009052.1"/>
</dbReference>
<dbReference type="SMR" id="A3D1F4"/>
<dbReference type="STRING" id="325240.Sbal_1043"/>
<dbReference type="KEGG" id="sbl:Sbal_1043"/>
<dbReference type="HOGENOM" id="CLU_017947_3_1_6"/>
<dbReference type="OrthoDB" id="140919at2"/>
<dbReference type="UniPathway" id="UPA00109">
    <property type="reaction ID" value="UER00181"/>
</dbReference>
<dbReference type="UniPathway" id="UPA00138"/>
<dbReference type="Proteomes" id="UP000001557">
    <property type="component" value="Chromosome"/>
</dbReference>
<dbReference type="GO" id="GO:0005829">
    <property type="term" value="C:cytosol"/>
    <property type="evidence" value="ECO:0007669"/>
    <property type="project" value="TreeGrafter"/>
</dbReference>
<dbReference type="GO" id="GO:0097367">
    <property type="term" value="F:carbohydrate derivative binding"/>
    <property type="evidence" value="ECO:0007669"/>
    <property type="project" value="InterPro"/>
</dbReference>
<dbReference type="GO" id="GO:0004347">
    <property type="term" value="F:glucose-6-phosphate isomerase activity"/>
    <property type="evidence" value="ECO:0007669"/>
    <property type="project" value="UniProtKB-UniRule"/>
</dbReference>
<dbReference type="GO" id="GO:0048029">
    <property type="term" value="F:monosaccharide binding"/>
    <property type="evidence" value="ECO:0007669"/>
    <property type="project" value="TreeGrafter"/>
</dbReference>
<dbReference type="GO" id="GO:0006094">
    <property type="term" value="P:gluconeogenesis"/>
    <property type="evidence" value="ECO:0007669"/>
    <property type="project" value="UniProtKB-UniRule"/>
</dbReference>
<dbReference type="GO" id="GO:0051156">
    <property type="term" value="P:glucose 6-phosphate metabolic process"/>
    <property type="evidence" value="ECO:0007669"/>
    <property type="project" value="TreeGrafter"/>
</dbReference>
<dbReference type="GO" id="GO:0006096">
    <property type="term" value="P:glycolytic process"/>
    <property type="evidence" value="ECO:0007669"/>
    <property type="project" value="UniProtKB-UniRule"/>
</dbReference>
<dbReference type="CDD" id="cd05015">
    <property type="entry name" value="SIS_PGI_1"/>
    <property type="match status" value="1"/>
</dbReference>
<dbReference type="CDD" id="cd05016">
    <property type="entry name" value="SIS_PGI_2"/>
    <property type="match status" value="1"/>
</dbReference>
<dbReference type="FunFam" id="3.40.50.10490:FF:000018">
    <property type="entry name" value="Glucose-6-phosphate isomerase"/>
    <property type="match status" value="1"/>
</dbReference>
<dbReference type="Gene3D" id="1.10.1390.10">
    <property type="match status" value="1"/>
</dbReference>
<dbReference type="Gene3D" id="3.40.50.10490">
    <property type="entry name" value="Glucose-6-phosphate isomerase like protein, domain 1"/>
    <property type="match status" value="2"/>
</dbReference>
<dbReference type="HAMAP" id="MF_00473">
    <property type="entry name" value="G6P_isomerase"/>
    <property type="match status" value="1"/>
</dbReference>
<dbReference type="InterPro" id="IPR001672">
    <property type="entry name" value="G6P_Isomerase"/>
</dbReference>
<dbReference type="InterPro" id="IPR023096">
    <property type="entry name" value="G6P_Isomerase_C"/>
</dbReference>
<dbReference type="InterPro" id="IPR018189">
    <property type="entry name" value="Phosphoglucose_isomerase_CS"/>
</dbReference>
<dbReference type="InterPro" id="IPR046348">
    <property type="entry name" value="SIS_dom_sf"/>
</dbReference>
<dbReference type="InterPro" id="IPR035476">
    <property type="entry name" value="SIS_PGI_1"/>
</dbReference>
<dbReference type="InterPro" id="IPR035482">
    <property type="entry name" value="SIS_PGI_2"/>
</dbReference>
<dbReference type="NCBIfam" id="NF001211">
    <property type="entry name" value="PRK00179.1"/>
    <property type="match status" value="1"/>
</dbReference>
<dbReference type="PANTHER" id="PTHR11469">
    <property type="entry name" value="GLUCOSE-6-PHOSPHATE ISOMERASE"/>
    <property type="match status" value="1"/>
</dbReference>
<dbReference type="PANTHER" id="PTHR11469:SF1">
    <property type="entry name" value="GLUCOSE-6-PHOSPHATE ISOMERASE"/>
    <property type="match status" value="1"/>
</dbReference>
<dbReference type="Pfam" id="PF00342">
    <property type="entry name" value="PGI"/>
    <property type="match status" value="1"/>
</dbReference>
<dbReference type="PRINTS" id="PR00662">
    <property type="entry name" value="G6PISOMERASE"/>
</dbReference>
<dbReference type="SUPFAM" id="SSF53697">
    <property type="entry name" value="SIS domain"/>
    <property type="match status" value="1"/>
</dbReference>
<dbReference type="PROSITE" id="PS00765">
    <property type="entry name" value="P_GLUCOSE_ISOMERASE_1"/>
    <property type="match status" value="1"/>
</dbReference>
<dbReference type="PROSITE" id="PS00174">
    <property type="entry name" value="P_GLUCOSE_ISOMERASE_2"/>
    <property type="match status" value="1"/>
</dbReference>
<dbReference type="PROSITE" id="PS51463">
    <property type="entry name" value="P_GLUCOSE_ISOMERASE_3"/>
    <property type="match status" value="1"/>
</dbReference>